<gene>
    <name type="ordered locus">MG288</name>
</gene>
<evidence type="ECO:0000305" key="1"/>
<proteinExistence type="inferred from homology"/>
<organism>
    <name type="scientific">Mycoplasma genitalium (strain ATCC 33530 / DSM 19775 / NCTC 10195 / G37)</name>
    <name type="common">Mycoplasmoides genitalium</name>
    <dbReference type="NCBI Taxonomy" id="243273"/>
    <lineage>
        <taxon>Bacteria</taxon>
        <taxon>Bacillati</taxon>
        <taxon>Mycoplasmatota</taxon>
        <taxon>Mycoplasmoidales</taxon>
        <taxon>Mycoplasmoidaceae</taxon>
        <taxon>Mycoplasmoides</taxon>
    </lineage>
</organism>
<accession>P47530</accession>
<reference key="1">
    <citation type="journal article" date="1995" name="Science">
        <title>The minimal gene complement of Mycoplasma genitalium.</title>
        <authorList>
            <person name="Fraser C.M."/>
            <person name="Gocayne J.D."/>
            <person name="White O."/>
            <person name="Adams M.D."/>
            <person name="Clayton R.A."/>
            <person name="Fleischmann R.D."/>
            <person name="Bult C.J."/>
            <person name="Kerlavage A.R."/>
            <person name="Sutton G.G."/>
            <person name="Kelley J.M."/>
            <person name="Fritchman J.L."/>
            <person name="Weidman J.F."/>
            <person name="Small K.V."/>
            <person name="Sandusky M."/>
            <person name="Fuhrmann J.L."/>
            <person name="Nguyen D.T."/>
            <person name="Utterback T.R."/>
            <person name="Saudek D.M."/>
            <person name="Phillips C.A."/>
            <person name="Merrick J.M."/>
            <person name="Tomb J.-F."/>
            <person name="Dougherty B.A."/>
            <person name="Bott K.F."/>
            <person name="Hu P.-C."/>
            <person name="Lucier T.S."/>
            <person name="Peterson S.N."/>
            <person name="Smith H.O."/>
            <person name="Hutchison C.A. III"/>
            <person name="Venter J.C."/>
        </authorList>
    </citation>
    <scope>NUCLEOTIDE SEQUENCE [LARGE SCALE GENOMIC DNA]</scope>
    <source>
        <strain>ATCC 33530 / DSM 19775 / NCTC 10195 / G37</strain>
    </source>
</reference>
<feature type="chain" id="PRO_0000215246" description="Uncharacterized protein MG288">
    <location>
        <begin position="1"/>
        <end position="414"/>
    </location>
</feature>
<name>Y288_MYCGE</name>
<protein>
    <recommendedName>
        <fullName>Uncharacterized protein MG288</fullName>
    </recommendedName>
</protein>
<dbReference type="EMBL" id="L43967">
    <property type="status" value="NOT_ANNOTATED_CDS"/>
    <property type="molecule type" value="Genomic_DNA"/>
</dbReference>
<dbReference type="PIR" id="H64231">
    <property type="entry name" value="H64231"/>
</dbReference>
<dbReference type="RefSeq" id="WP_041360951.1">
    <property type="nucleotide sequence ID" value="NC_000908.2"/>
</dbReference>
<dbReference type="SMR" id="P47530"/>
<dbReference type="GeneID" id="88282450"/>
<dbReference type="InParanoid" id="P47530"/>
<dbReference type="Proteomes" id="UP000000807">
    <property type="component" value="Chromosome"/>
</dbReference>
<dbReference type="InterPro" id="IPR004306">
    <property type="entry name" value="DUF237"/>
</dbReference>
<dbReference type="InterPro" id="IPR004319">
    <property type="entry name" value="DUF240"/>
</dbReference>
<dbReference type="Pfam" id="PF03072">
    <property type="entry name" value="DUF237"/>
    <property type="match status" value="1"/>
</dbReference>
<dbReference type="Pfam" id="PF03086">
    <property type="entry name" value="DUF240"/>
    <property type="match status" value="1"/>
</dbReference>
<comment type="similarity">
    <text evidence="1">Belongs to the MG032/MG096/MG288 family.</text>
</comment>
<sequence length="414" mass="48435">MDFEVDYEGGNNTVNLQFDLKAQTSNFLNLQELQNSFNGNDLNTQLFWKPLINKLVDKNQNDLTSIAKTAVSDSLFLSNTNIFNSVLKIDEQLDLAKTKFEKEIIEPFKKEREKAKADYEEQQRILAEERRKQEEELKRKEEEAKRLKEQQEQFNKSFENAKEFKDYWKNQKKDVTDKTQLIDALKTSFAADKNKTFSLLINSFTKATSDYYKNNKKDESENAKKAFSEKGIQFPRQGLEGLYMSDWLRGKLTSYTDIKLNLTSIKIENKENNPTIDWKNNGIEFRQHYPYKFKFEIDIKYQGGYKLTGLFSWFAPFSGIPSSWNGEMDVKFIVDGDLDYNLVQNTDYPGSLFQFKDNQLLFTLHVKEQIKVQDGKFMDLLKQQNLHNLDLRNGATKPPVVDLASYLHYLVLNS</sequence>
<keyword id="KW-1185">Reference proteome</keyword>